<organism>
    <name type="scientific">Escherichia coli O139:H28 (strain E24377A / ETEC)</name>
    <dbReference type="NCBI Taxonomy" id="331111"/>
    <lineage>
        <taxon>Bacteria</taxon>
        <taxon>Pseudomonadati</taxon>
        <taxon>Pseudomonadota</taxon>
        <taxon>Gammaproteobacteria</taxon>
        <taxon>Enterobacterales</taxon>
        <taxon>Enterobacteriaceae</taxon>
        <taxon>Escherichia</taxon>
    </lineage>
</organism>
<sequence length="252" mass="29042">MSDWNPSLYLHFAAERSRPAVELLARVPLENIKYVADLGCGPGNSTALLHQRWPAARITGIDSSPAMIAEARSALPDCQFVEADIRNWQPEQALDLIFANASLQWLPDHYELFPHLVSLLNPQGVLAVQMPDNWLEPTHVLMREVAWEQNYPDRGREPLAGVHAYYDILSEAGCEVDIWRTTYYHQMPSHQAIIDWVTATGLRPWLQDLTESEQQLFLKRYHQMLEEQYPLQENGQILLAFPRLFIVARRME</sequence>
<protein>
    <recommendedName>
        <fullName evidence="1">Trans-aconitate 2-methyltransferase</fullName>
        <ecNumber evidence="1">2.1.1.144</ecNumber>
    </recommendedName>
</protein>
<keyword id="KW-0963">Cytoplasm</keyword>
<keyword id="KW-0489">Methyltransferase</keyword>
<keyword id="KW-1185">Reference proteome</keyword>
<keyword id="KW-0949">S-adenosyl-L-methionine</keyword>
<keyword id="KW-0808">Transferase</keyword>
<proteinExistence type="inferred from homology"/>
<dbReference type="EC" id="2.1.1.144" evidence="1"/>
<dbReference type="EMBL" id="CP000800">
    <property type="protein sequence ID" value="ABV16924.1"/>
    <property type="molecule type" value="Genomic_DNA"/>
</dbReference>
<dbReference type="RefSeq" id="WP_001286566.1">
    <property type="nucleotide sequence ID" value="NC_009801.1"/>
</dbReference>
<dbReference type="SMR" id="A7ZLX5"/>
<dbReference type="KEGG" id="ecw:EcE24377A_1719"/>
<dbReference type="HOGENOM" id="CLU_037990_5_2_6"/>
<dbReference type="Proteomes" id="UP000001122">
    <property type="component" value="Chromosome"/>
</dbReference>
<dbReference type="GO" id="GO:0005737">
    <property type="term" value="C:cytoplasm"/>
    <property type="evidence" value="ECO:0007669"/>
    <property type="project" value="UniProtKB-SubCell"/>
</dbReference>
<dbReference type="GO" id="GO:0030798">
    <property type="term" value="F:trans-aconitate 2-methyltransferase activity"/>
    <property type="evidence" value="ECO:0007669"/>
    <property type="project" value="UniProtKB-UniRule"/>
</dbReference>
<dbReference type="GO" id="GO:0032259">
    <property type="term" value="P:methylation"/>
    <property type="evidence" value="ECO:0007669"/>
    <property type="project" value="UniProtKB-KW"/>
</dbReference>
<dbReference type="CDD" id="cd02440">
    <property type="entry name" value="AdoMet_MTases"/>
    <property type="match status" value="1"/>
</dbReference>
<dbReference type="Gene3D" id="1.10.150.290">
    <property type="entry name" value="S-adenosyl-L-methionine-dependent methyltransferases"/>
    <property type="match status" value="1"/>
</dbReference>
<dbReference type="Gene3D" id="3.40.50.150">
    <property type="entry name" value="Vaccinia Virus protein VP39"/>
    <property type="match status" value="1"/>
</dbReference>
<dbReference type="HAMAP" id="MF_00560">
    <property type="entry name" value="Tran_acon_Me_trans"/>
    <property type="match status" value="1"/>
</dbReference>
<dbReference type="InterPro" id="IPR041698">
    <property type="entry name" value="Methyltransf_25"/>
</dbReference>
<dbReference type="InterPro" id="IPR029063">
    <property type="entry name" value="SAM-dependent_MTases_sf"/>
</dbReference>
<dbReference type="InterPro" id="IPR023506">
    <property type="entry name" value="Trans-aconitate_MeTrfase"/>
</dbReference>
<dbReference type="InterPro" id="IPR023149">
    <property type="entry name" value="Trans_acon_MeTrfase_C"/>
</dbReference>
<dbReference type="NCBIfam" id="NF002463">
    <property type="entry name" value="PRK01683.1"/>
    <property type="match status" value="1"/>
</dbReference>
<dbReference type="PANTHER" id="PTHR43861:SF1">
    <property type="entry name" value="TRANS-ACONITATE 2-METHYLTRANSFERASE"/>
    <property type="match status" value="1"/>
</dbReference>
<dbReference type="PANTHER" id="PTHR43861">
    <property type="entry name" value="TRANS-ACONITATE 2-METHYLTRANSFERASE-RELATED"/>
    <property type="match status" value="1"/>
</dbReference>
<dbReference type="Pfam" id="PF13649">
    <property type="entry name" value="Methyltransf_25"/>
    <property type="match status" value="1"/>
</dbReference>
<dbReference type="SUPFAM" id="SSF53335">
    <property type="entry name" value="S-adenosyl-L-methionine-dependent methyltransferases"/>
    <property type="match status" value="1"/>
</dbReference>
<comment type="function">
    <text evidence="1">Catalyzes the S-adenosylmethionine monomethyl esterification of trans-aconitate.</text>
</comment>
<comment type="catalytic activity">
    <reaction evidence="1">
        <text>trans-aconitate + S-adenosyl-L-methionine = (E)-3-(methoxycarbonyl)pent-2-enedioate + S-adenosyl-L-homocysteine</text>
        <dbReference type="Rhea" id="RHEA:14969"/>
        <dbReference type="ChEBI" id="CHEBI:15708"/>
        <dbReference type="ChEBI" id="CHEBI:57470"/>
        <dbReference type="ChEBI" id="CHEBI:57856"/>
        <dbReference type="ChEBI" id="CHEBI:59789"/>
        <dbReference type="EC" id="2.1.1.144"/>
    </reaction>
</comment>
<comment type="subcellular location">
    <subcellularLocation>
        <location evidence="1">Cytoplasm</location>
    </subcellularLocation>
</comment>
<comment type="similarity">
    <text evidence="1">Belongs to the methyltransferase superfamily. Tam family.</text>
</comment>
<feature type="chain" id="PRO_1000061120" description="Trans-aconitate 2-methyltransferase">
    <location>
        <begin position="1"/>
        <end position="252"/>
    </location>
</feature>
<gene>
    <name evidence="1" type="primary">tam</name>
    <name type="ordered locus">EcE24377A_1719</name>
</gene>
<reference key="1">
    <citation type="journal article" date="2008" name="J. Bacteriol.">
        <title>The pangenome structure of Escherichia coli: comparative genomic analysis of E. coli commensal and pathogenic isolates.</title>
        <authorList>
            <person name="Rasko D.A."/>
            <person name="Rosovitz M.J."/>
            <person name="Myers G.S.A."/>
            <person name="Mongodin E.F."/>
            <person name="Fricke W.F."/>
            <person name="Gajer P."/>
            <person name="Crabtree J."/>
            <person name="Sebaihia M."/>
            <person name="Thomson N.R."/>
            <person name="Chaudhuri R."/>
            <person name="Henderson I.R."/>
            <person name="Sperandio V."/>
            <person name="Ravel J."/>
        </authorList>
    </citation>
    <scope>NUCLEOTIDE SEQUENCE [LARGE SCALE GENOMIC DNA]</scope>
    <source>
        <strain>E24377A / ETEC</strain>
    </source>
</reference>
<name>TAM_ECO24</name>
<accession>A7ZLX5</accession>
<evidence type="ECO:0000255" key="1">
    <source>
        <dbReference type="HAMAP-Rule" id="MF_00560"/>
    </source>
</evidence>